<proteinExistence type="inferred from homology"/>
<dbReference type="EMBL" id="CP000020">
    <property type="protein sequence ID" value="AAW86805.1"/>
    <property type="molecule type" value="Genomic_DNA"/>
</dbReference>
<dbReference type="RefSeq" id="WP_005421134.1">
    <property type="nucleotide sequence ID" value="NZ_CAWLES010000001.1"/>
</dbReference>
<dbReference type="RefSeq" id="YP_205693.1">
    <property type="nucleotide sequence ID" value="NC_006840.2"/>
</dbReference>
<dbReference type="SMR" id="Q5E2E1"/>
<dbReference type="STRING" id="312309.VF_2310"/>
<dbReference type="EnsemblBacteria" id="AAW86805">
    <property type="protein sequence ID" value="AAW86805"/>
    <property type="gene ID" value="VF_2310"/>
</dbReference>
<dbReference type="GeneID" id="54165025"/>
<dbReference type="KEGG" id="vfi:VF_2310"/>
<dbReference type="PATRIC" id="fig|312309.11.peg.2348"/>
<dbReference type="eggNOG" id="COG0359">
    <property type="taxonomic scope" value="Bacteria"/>
</dbReference>
<dbReference type="HOGENOM" id="CLU_078938_4_1_6"/>
<dbReference type="OrthoDB" id="9788336at2"/>
<dbReference type="Proteomes" id="UP000000537">
    <property type="component" value="Chromosome I"/>
</dbReference>
<dbReference type="GO" id="GO:1990904">
    <property type="term" value="C:ribonucleoprotein complex"/>
    <property type="evidence" value="ECO:0007669"/>
    <property type="project" value="UniProtKB-KW"/>
</dbReference>
<dbReference type="GO" id="GO:0005840">
    <property type="term" value="C:ribosome"/>
    <property type="evidence" value="ECO:0007669"/>
    <property type="project" value="UniProtKB-KW"/>
</dbReference>
<dbReference type="GO" id="GO:0019843">
    <property type="term" value="F:rRNA binding"/>
    <property type="evidence" value="ECO:0007669"/>
    <property type="project" value="UniProtKB-UniRule"/>
</dbReference>
<dbReference type="GO" id="GO:0003735">
    <property type="term" value="F:structural constituent of ribosome"/>
    <property type="evidence" value="ECO:0007669"/>
    <property type="project" value="InterPro"/>
</dbReference>
<dbReference type="GO" id="GO:0006412">
    <property type="term" value="P:translation"/>
    <property type="evidence" value="ECO:0007669"/>
    <property type="project" value="UniProtKB-UniRule"/>
</dbReference>
<dbReference type="FunFam" id="3.10.430.100:FF:000001">
    <property type="entry name" value="50S ribosomal protein L9"/>
    <property type="match status" value="1"/>
</dbReference>
<dbReference type="FunFam" id="3.40.5.10:FF:000001">
    <property type="entry name" value="50S ribosomal protein L9"/>
    <property type="match status" value="1"/>
</dbReference>
<dbReference type="Gene3D" id="3.10.430.100">
    <property type="entry name" value="Ribosomal protein L9, C-terminal domain"/>
    <property type="match status" value="1"/>
</dbReference>
<dbReference type="Gene3D" id="3.40.5.10">
    <property type="entry name" value="Ribosomal protein L9, N-terminal domain"/>
    <property type="match status" value="1"/>
</dbReference>
<dbReference type="HAMAP" id="MF_00503">
    <property type="entry name" value="Ribosomal_bL9"/>
    <property type="match status" value="1"/>
</dbReference>
<dbReference type="InterPro" id="IPR000244">
    <property type="entry name" value="Ribosomal_bL9"/>
</dbReference>
<dbReference type="InterPro" id="IPR009027">
    <property type="entry name" value="Ribosomal_bL9/RNase_H1_N"/>
</dbReference>
<dbReference type="InterPro" id="IPR020594">
    <property type="entry name" value="Ribosomal_bL9_bac/chp"/>
</dbReference>
<dbReference type="InterPro" id="IPR020069">
    <property type="entry name" value="Ribosomal_bL9_C"/>
</dbReference>
<dbReference type="InterPro" id="IPR036791">
    <property type="entry name" value="Ribosomal_bL9_C_sf"/>
</dbReference>
<dbReference type="InterPro" id="IPR020070">
    <property type="entry name" value="Ribosomal_bL9_N"/>
</dbReference>
<dbReference type="InterPro" id="IPR036935">
    <property type="entry name" value="Ribosomal_bL9_N_sf"/>
</dbReference>
<dbReference type="NCBIfam" id="TIGR00158">
    <property type="entry name" value="L9"/>
    <property type="match status" value="1"/>
</dbReference>
<dbReference type="PANTHER" id="PTHR21368">
    <property type="entry name" value="50S RIBOSOMAL PROTEIN L9"/>
    <property type="match status" value="1"/>
</dbReference>
<dbReference type="Pfam" id="PF03948">
    <property type="entry name" value="Ribosomal_L9_C"/>
    <property type="match status" value="1"/>
</dbReference>
<dbReference type="Pfam" id="PF01281">
    <property type="entry name" value="Ribosomal_L9_N"/>
    <property type="match status" value="1"/>
</dbReference>
<dbReference type="SUPFAM" id="SSF55658">
    <property type="entry name" value="L9 N-domain-like"/>
    <property type="match status" value="1"/>
</dbReference>
<dbReference type="SUPFAM" id="SSF55653">
    <property type="entry name" value="Ribosomal protein L9 C-domain"/>
    <property type="match status" value="1"/>
</dbReference>
<dbReference type="PROSITE" id="PS00651">
    <property type="entry name" value="RIBOSOMAL_L9"/>
    <property type="match status" value="1"/>
</dbReference>
<name>RL9_ALIF1</name>
<reference key="1">
    <citation type="journal article" date="2005" name="Proc. Natl. Acad. Sci. U.S.A.">
        <title>Complete genome sequence of Vibrio fischeri: a symbiotic bacterium with pathogenic congeners.</title>
        <authorList>
            <person name="Ruby E.G."/>
            <person name="Urbanowski M."/>
            <person name="Campbell J."/>
            <person name="Dunn A."/>
            <person name="Faini M."/>
            <person name="Gunsalus R."/>
            <person name="Lostroh P."/>
            <person name="Lupp C."/>
            <person name="McCann J."/>
            <person name="Millikan D."/>
            <person name="Schaefer A."/>
            <person name="Stabb E."/>
            <person name="Stevens A."/>
            <person name="Visick K."/>
            <person name="Whistler C."/>
            <person name="Greenberg E.P."/>
        </authorList>
    </citation>
    <scope>NUCLEOTIDE SEQUENCE [LARGE SCALE GENOMIC DNA]</scope>
    <source>
        <strain>ATCC 700601 / ES114</strain>
    </source>
</reference>
<keyword id="KW-1185">Reference proteome</keyword>
<keyword id="KW-0687">Ribonucleoprotein</keyword>
<keyword id="KW-0689">Ribosomal protein</keyword>
<keyword id="KW-0694">RNA-binding</keyword>
<keyword id="KW-0699">rRNA-binding</keyword>
<comment type="function">
    <text evidence="1">Binds to the 23S rRNA.</text>
</comment>
<comment type="similarity">
    <text evidence="1">Belongs to the bacterial ribosomal protein bL9 family.</text>
</comment>
<evidence type="ECO:0000255" key="1">
    <source>
        <dbReference type="HAMAP-Rule" id="MF_00503"/>
    </source>
</evidence>
<evidence type="ECO:0000305" key="2"/>
<sequence>MQVILLDKIGNLGSLGDQVNVKAGYARNFLIPQGKAVMATKANVEMFETRRAELEANVAKQLAAAEARAEKVNALEVTIASKSGDEGKLFGSIGTRDIAEAATAAGVEIAKSEVRLPEGALRTTGSFEVSIQLHSEVFATLKLEVVAAE</sequence>
<protein>
    <recommendedName>
        <fullName evidence="1">Large ribosomal subunit protein bL9</fullName>
    </recommendedName>
    <alternativeName>
        <fullName evidence="2">50S ribosomal protein L9</fullName>
    </alternativeName>
</protein>
<gene>
    <name evidence="1" type="primary">rplI</name>
    <name type="ordered locus">VF_2310</name>
</gene>
<accession>Q5E2E1</accession>
<feature type="chain" id="PRO_0000236617" description="Large ribosomal subunit protein bL9">
    <location>
        <begin position="1"/>
        <end position="149"/>
    </location>
</feature>
<organism>
    <name type="scientific">Aliivibrio fischeri (strain ATCC 700601 / ES114)</name>
    <name type="common">Vibrio fischeri</name>
    <dbReference type="NCBI Taxonomy" id="312309"/>
    <lineage>
        <taxon>Bacteria</taxon>
        <taxon>Pseudomonadati</taxon>
        <taxon>Pseudomonadota</taxon>
        <taxon>Gammaproteobacteria</taxon>
        <taxon>Vibrionales</taxon>
        <taxon>Vibrionaceae</taxon>
        <taxon>Aliivibrio</taxon>
    </lineage>
</organism>